<accession>Q83C71</accession>
<gene>
    <name evidence="1" type="primary">ndk</name>
    <name type="ordered locus">CBU_1258</name>
</gene>
<dbReference type="EC" id="2.7.4.6" evidence="1"/>
<dbReference type="EMBL" id="AE016828">
    <property type="protein sequence ID" value="AAO90766.1"/>
    <property type="molecule type" value="Genomic_DNA"/>
</dbReference>
<dbReference type="RefSeq" id="NP_820252.1">
    <property type="nucleotide sequence ID" value="NC_002971.4"/>
</dbReference>
<dbReference type="RefSeq" id="WP_010958107.1">
    <property type="nucleotide sequence ID" value="NZ_CCYB01000031.1"/>
</dbReference>
<dbReference type="SMR" id="Q83C71"/>
<dbReference type="STRING" id="227377.CBU_1258"/>
<dbReference type="DNASU" id="1209163"/>
<dbReference type="EnsemblBacteria" id="AAO90766">
    <property type="protein sequence ID" value="AAO90766"/>
    <property type="gene ID" value="CBU_1258"/>
</dbReference>
<dbReference type="GeneID" id="1209163"/>
<dbReference type="KEGG" id="cbu:CBU_1258"/>
<dbReference type="PATRIC" id="fig|227377.7.peg.1249"/>
<dbReference type="eggNOG" id="COG0105">
    <property type="taxonomic scope" value="Bacteria"/>
</dbReference>
<dbReference type="HOGENOM" id="CLU_060216_8_1_6"/>
<dbReference type="OrthoDB" id="9801161at2"/>
<dbReference type="Proteomes" id="UP000002671">
    <property type="component" value="Chromosome"/>
</dbReference>
<dbReference type="GO" id="GO:0005737">
    <property type="term" value="C:cytoplasm"/>
    <property type="evidence" value="ECO:0007669"/>
    <property type="project" value="UniProtKB-SubCell"/>
</dbReference>
<dbReference type="GO" id="GO:0005524">
    <property type="term" value="F:ATP binding"/>
    <property type="evidence" value="ECO:0007669"/>
    <property type="project" value="UniProtKB-UniRule"/>
</dbReference>
<dbReference type="GO" id="GO:0046872">
    <property type="term" value="F:metal ion binding"/>
    <property type="evidence" value="ECO:0007669"/>
    <property type="project" value="UniProtKB-KW"/>
</dbReference>
<dbReference type="GO" id="GO:0004550">
    <property type="term" value="F:nucleoside diphosphate kinase activity"/>
    <property type="evidence" value="ECO:0007669"/>
    <property type="project" value="UniProtKB-UniRule"/>
</dbReference>
<dbReference type="GO" id="GO:0006241">
    <property type="term" value="P:CTP biosynthetic process"/>
    <property type="evidence" value="ECO:0007669"/>
    <property type="project" value="UniProtKB-UniRule"/>
</dbReference>
<dbReference type="GO" id="GO:0006183">
    <property type="term" value="P:GTP biosynthetic process"/>
    <property type="evidence" value="ECO:0007669"/>
    <property type="project" value="UniProtKB-UniRule"/>
</dbReference>
<dbReference type="GO" id="GO:0006163">
    <property type="term" value="P:purine nucleotide metabolic process"/>
    <property type="evidence" value="ECO:0000318"/>
    <property type="project" value="GO_Central"/>
</dbReference>
<dbReference type="GO" id="GO:0006220">
    <property type="term" value="P:pyrimidine nucleotide metabolic process"/>
    <property type="evidence" value="ECO:0000318"/>
    <property type="project" value="GO_Central"/>
</dbReference>
<dbReference type="GO" id="GO:0006228">
    <property type="term" value="P:UTP biosynthetic process"/>
    <property type="evidence" value="ECO:0007669"/>
    <property type="project" value="UniProtKB-UniRule"/>
</dbReference>
<dbReference type="CDD" id="cd04413">
    <property type="entry name" value="NDPk_I"/>
    <property type="match status" value="1"/>
</dbReference>
<dbReference type="FunFam" id="3.30.70.141:FF:000001">
    <property type="entry name" value="Nucleoside diphosphate kinase"/>
    <property type="match status" value="1"/>
</dbReference>
<dbReference type="Gene3D" id="3.30.70.141">
    <property type="entry name" value="Nucleoside diphosphate kinase-like domain"/>
    <property type="match status" value="1"/>
</dbReference>
<dbReference type="HAMAP" id="MF_00451">
    <property type="entry name" value="NDP_kinase"/>
    <property type="match status" value="1"/>
</dbReference>
<dbReference type="InterPro" id="IPR034907">
    <property type="entry name" value="NDK-like_dom"/>
</dbReference>
<dbReference type="InterPro" id="IPR036850">
    <property type="entry name" value="NDK-like_dom_sf"/>
</dbReference>
<dbReference type="InterPro" id="IPR001564">
    <property type="entry name" value="Nucleoside_diP_kinase"/>
</dbReference>
<dbReference type="InterPro" id="IPR023005">
    <property type="entry name" value="Nucleoside_diP_kinase_AS"/>
</dbReference>
<dbReference type="NCBIfam" id="NF001908">
    <property type="entry name" value="PRK00668.1"/>
    <property type="match status" value="1"/>
</dbReference>
<dbReference type="PANTHER" id="PTHR11349">
    <property type="entry name" value="NUCLEOSIDE DIPHOSPHATE KINASE"/>
    <property type="match status" value="1"/>
</dbReference>
<dbReference type="Pfam" id="PF00334">
    <property type="entry name" value="NDK"/>
    <property type="match status" value="1"/>
</dbReference>
<dbReference type="PRINTS" id="PR01243">
    <property type="entry name" value="NUCDPKINASE"/>
</dbReference>
<dbReference type="SMART" id="SM00562">
    <property type="entry name" value="NDK"/>
    <property type="match status" value="1"/>
</dbReference>
<dbReference type="SUPFAM" id="SSF54919">
    <property type="entry name" value="Nucleoside diphosphate kinase, NDK"/>
    <property type="match status" value="1"/>
</dbReference>
<dbReference type="PROSITE" id="PS00469">
    <property type="entry name" value="NDPK"/>
    <property type="match status" value="1"/>
</dbReference>
<dbReference type="PROSITE" id="PS51374">
    <property type="entry name" value="NDPK_LIKE"/>
    <property type="match status" value="1"/>
</dbReference>
<feature type="chain" id="PRO_0000136974" description="Nucleoside diphosphate kinase">
    <location>
        <begin position="1"/>
        <end position="144"/>
    </location>
</feature>
<feature type="active site" description="Pros-phosphohistidine intermediate" evidence="1">
    <location>
        <position position="117"/>
    </location>
</feature>
<feature type="binding site" evidence="1">
    <location>
        <position position="11"/>
    </location>
    <ligand>
        <name>ATP</name>
        <dbReference type="ChEBI" id="CHEBI:30616"/>
    </ligand>
</feature>
<feature type="binding site" evidence="1">
    <location>
        <position position="59"/>
    </location>
    <ligand>
        <name>ATP</name>
        <dbReference type="ChEBI" id="CHEBI:30616"/>
    </ligand>
</feature>
<feature type="binding site" evidence="1">
    <location>
        <position position="87"/>
    </location>
    <ligand>
        <name>ATP</name>
        <dbReference type="ChEBI" id="CHEBI:30616"/>
    </ligand>
</feature>
<feature type="binding site" evidence="1">
    <location>
        <position position="93"/>
    </location>
    <ligand>
        <name>ATP</name>
        <dbReference type="ChEBI" id="CHEBI:30616"/>
    </ligand>
</feature>
<feature type="binding site" evidence="1">
    <location>
        <position position="104"/>
    </location>
    <ligand>
        <name>ATP</name>
        <dbReference type="ChEBI" id="CHEBI:30616"/>
    </ligand>
</feature>
<feature type="binding site" evidence="1">
    <location>
        <position position="114"/>
    </location>
    <ligand>
        <name>ATP</name>
        <dbReference type="ChEBI" id="CHEBI:30616"/>
    </ligand>
</feature>
<name>NDK_COXBU</name>
<keyword id="KW-0067">ATP-binding</keyword>
<keyword id="KW-0963">Cytoplasm</keyword>
<keyword id="KW-0418">Kinase</keyword>
<keyword id="KW-0460">Magnesium</keyword>
<keyword id="KW-0479">Metal-binding</keyword>
<keyword id="KW-0546">Nucleotide metabolism</keyword>
<keyword id="KW-0547">Nucleotide-binding</keyword>
<keyword id="KW-0597">Phosphoprotein</keyword>
<keyword id="KW-1185">Reference proteome</keyword>
<keyword id="KW-0808">Transferase</keyword>
<protein>
    <recommendedName>
        <fullName evidence="1">Nucleoside diphosphate kinase</fullName>
        <shortName evidence="1">NDK</shortName>
        <shortName evidence="1">NDP kinase</shortName>
        <ecNumber evidence="1">2.7.4.6</ecNumber>
    </recommendedName>
    <alternativeName>
        <fullName evidence="1">Nucleoside-2-P kinase</fullName>
    </alternativeName>
</protein>
<proteinExistence type="inferred from homology"/>
<comment type="function">
    <text evidence="1">Major role in the synthesis of nucleoside triphosphates other than ATP. The ATP gamma phosphate is transferred to the NDP beta phosphate via a ping-pong mechanism, using a phosphorylated active-site intermediate.</text>
</comment>
<comment type="catalytic activity">
    <reaction evidence="1">
        <text>a 2'-deoxyribonucleoside 5'-diphosphate + ATP = a 2'-deoxyribonucleoside 5'-triphosphate + ADP</text>
        <dbReference type="Rhea" id="RHEA:44640"/>
        <dbReference type="ChEBI" id="CHEBI:30616"/>
        <dbReference type="ChEBI" id="CHEBI:61560"/>
        <dbReference type="ChEBI" id="CHEBI:73316"/>
        <dbReference type="ChEBI" id="CHEBI:456216"/>
        <dbReference type="EC" id="2.7.4.6"/>
    </reaction>
</comment>
<comment type="catalytic activity">
    <reaction evidence="1">
        <text>a ribonucleoside 5'-diphosphate + ATP = a ribonucleoside 5'-triphosphate + ADP</text>
        <dbReference type="Rhea" id="RHEA:18113"/>
        <dbReference type="ChEBI" id="CHEBI:30616"/>
        <dbReference type="ChEBI" id="CHEBI:57930"/>
        <dbReference type="ChEBI" id="CHEBI:61557"/>
        <dbReference type="ChEBI" id="CHEBI:456216"/>
        <dbReference type="EC" id="2.7.4.6"/>
    </reaction>
</comment>
<comment type="cofactor">
    <cofactor evidence="1">
        <name>Mg(2+)</name>
        <dbReference type="ChEBI" id="CHEBI:18420"/>
    </cofactor>
</comment>
<comment type="subunit">
    <text evidence="1">Homotetramer.</text>
</comment>
<comment type="subcellular location">
    <subcellularLocation>
        <location evidence="1">Cytoplasm</location>
    </subcellularLocation>
</comment>
<comment type="similarity">
    <text evidence="1">Belongs to the NDK family.</text>
</comment>
<reference key="1">
    <citation type="journal article" date="2003" name="Proc. Natl. Acad. Sci. U.S.A.">
        <title>Complete genome sequence of the Q-fever pathogen, Coxiella burnetii.</title>
        <authorList>
            <person name="Seshadri R."/>
            <person name="Paulsen I.T."/>
            <person name="Eisen J.A."/>
            <person name="Read T.D."/>
            <person name="Nelson K.E."/>
            <person name="Nelson W.C."/>
            <person name="Ward N.L."/>
            <person name="Tettelin H."/>
            <person name="Davidsen T.M."/>
            <person name="Beanan M.J."/>
            <person name="DeBoy R.T."/>
            <person name="Daugherty S.C."/>
            <person name="Brinkac L.M."/>
            <person name="Madupu R."/>
            <person name="Dodson R.J."/>
            <person name="Khouri H.M."/>
            <person name="Lee K.H."/>
            <person name="Carty H.A."/>
            <person name="Scanlan D."/>
            <person name="Heinzen R.A."/>
            <person name="Thompson H.A."/>
            <person name="Samuel J.E."/>
            <person name="Fraser C.M."/>
            <person name="Heidelberg J.F."/>
        </authorList>
    </citation>
    <scope>NUCLEOTIDE SEQUENCE [LARGE SCALE GENOMIC DNA]</scope>
    <source>
        <strain>RSA 493 / Nine Mile phase I</strain>
    </source>
</reference>
<sequence length="144" mass="15854">MAIERTLSIIKPDAVAKNVIGQIYSRFEKAGLKIIAAKMCHLSKPQAEKFYAVHKDRPFYPDLVKFMTQGPVMIQVLEGENAIVKNREIMGATNPKEALPGTIRADFADSIDANAVHGSDGPETAKEEIAFFFKPDESFNSIGV</sequence>
<organism>
    <name type="scientific">Coxiella burnetii (strain RSA 493 / Nine Mile phase I)</name>
    <dbReference type="NCBI Taxonomy" id="227377"/>
    <lineage>
        <taxon>Bacteria</taxon>
        <taxon>Pseudomonadati</taxon>
        <taxon>Pseudomonadota</taxon>
        <taxon>Gammaproteobacteria</taxon>
        <taxon>Legionellales</taxon>
        <taxon>Coxiellaceae</taxon>
        <taxon>Coxiella</taxon>
    </lineage>
</organism>
<evidence type="ECO:0000255" key="1">
    <source>
        <dbReference type="HAMAP-Rule" id="MF_00451"/>
    </source>
</evidence>